<organism>
    <name type="scientific">Vibrio vulnificus (strain YJ016)</name>
    <dbReference type="NCBI Taxonomy" id="196600"/>
    <lineage>
        <taxon>Bacteria</taxon>
        <taxon>Pseudomonadati</taxon>
        <taxon>Pseudomonadota</taxon>
        <taxon>Gammaproteobacteria</taxon>
        <taxon>Vibrionales</taxon>
        <taxon>Vibrionaceae</taxon>
        <taxon>Vibrio</taxon>
    </lineage>
</organism>
<gene>
    <name evidence="1" type="primary">maeA2</name>
    <name type="ordered locus">VV2242</name>
</gene>
<evidence type="ECO:0000255" key="1">
    <source>
        <dbReference type="HAMAP-Rule" id="MF_01619"/>
    </source>
</evidence>
<reference key="1">
    <citation type="journal article" date="2003" name="Genome Res.">
        <title>Comparative genome analysis of Vibrio vulnificus, a marine pathogen.</title>
        <authorList>
            <person name="Chen C.-Y."/>
            <person name="Wu K.-M."/>
            <person name="Chang Y.-C."/>
            <person name="Chang C.-H."/>
            <person name="Tsai H.-C."/>
            <person name="Liao T.-L."/>
            <person name="Liu Y.-M."/>
            <person name="Chen H.-J."/>
            <person name="Shen A.B.-T."/>
            <person name="Li J.-C."/>
            <person name="Su T.-L."/>
            <person name="Shao C.-P."/>
            <person name="Lee C.-T."/>
            <person name="Hor L.-I."/>
            <person name="Tsai S.-F."/>
        </authorList>
    </citation>
    <scope>NUCLEOTIDE SEQUENCE [LARGE SCALE GENOMIC DNA]</scope>
    <source>
        <strain>YJ016</strain>
    </source>
</reference>
<dbReference type="EC" id="1.1.1.38" evidence="1"/>
<dbReference type="EMBL" id="BA000037">
    <property type="protein sequence ID" value="BAC95006.1"/>
    <property type="molecule type" value="Genomic_DNA"/>
</dbReference>
<dbReference type="RefSeq" id="WP_011150752.1">
    <property type="nucleotide sequence ID" value="NC_005139.1"/>
</dbReference>
<dbReference type="SMR" id="Q7MJC0"/>
<dbReference type="KEGG" id="vvy:VV2242"/>
<dbReference type="PATRIC" id="fig|196600.6.peg.2257"/>
<dbReference type="HOGENOM" id="CLU_011405_5_2_6"/>
<dbReference type="Proteomes" id="UP000002675">
    <property type="component" value="Chromosome I"/>
</dbReference>
<dbReference type="GO" id="GO:0005829">
    <property type="term" value="C:cytosol"/>
    <property type="evidence" value="ECO:0007669"/>
    <property type="project" value="TreeGrafter"/>
</dbReference>
<dbReference type="GO" id="GO:0004471">
    <property type="term" value="F:malate dehydrogenase (decarboxylating) (NAD+) activity"/>
    <property type="evidence" value="ECO:0007669"/>
    <property type="project" value="UniProtKB-UniRule"/>
</dbReference>
<dbReference type="GO" id="GO:0046872">
    <property type="term" value="F:metal ion binding"/>
    <property type="evidence" value="ECO:0007669"/>
    <property type="project" value="UniProtKB-KW"/>
</dbReference>
<dbReference type="GO" id="GO:0051287">
    <property type="term" value="F:NAD binding"/>
    <property type="evidence" value="ECO:0007669"/>
    <property type="project" value="InterPro"/>
</dbReference>
<dbReference type="GO" id="GO:0008948">
    <property type="term" value="F:oxaloacetate decarboxylase activity"/>
    <property type="evidence" value="ECO:0007669"/>
    <property type="project" value="UniProtKB-UniRule"/>
</dbReference>
<dbReference type="GO" id="GO:0006108">
    <property type="term" value="P:malate metabolic process"/>
    <property type="evidence" value="ECO:0007669"/>
    <property type="project" value="TreeGrafter"/>
</dbReference>
<dbReference type="CDD" id="cd05312">
    <property type="entry name" value="NAD_bind_1_malic_enz"/>
    <property type="match status" value="1"/>
</dbReference>
<dbReference type="FunFam" id="3.40.50.10380:FF:000001">
    <property type="entry name" value="NAD-dependent malic enzyme"/>
    <property type="match status" value="1"/>
</dbReference>
<dbReference type="FunFam" id="3.40.50.720:FF:000055">
    <property type="entry name" value="NAD-dependent malic enzyme"/>
    <property type="match status" value="1"/>
</dbReference>
<dbReference type="Gene3D" id="3.40.50.10380">
    <property type="entry name" value="Malic enzyme, N-terminal domain"/>
    <property type="match status" value="1"/>
</dbReference>
<dbReference type="Gene3D" id="3.40.50.720">
    <property type="entry name" value="NAD(P)-binding Rossmann-like Domain"/>
    <property type="match status" value="1"/>
</dbReference>
<dbReference type="HAMAP" id="MF_01619">
    <property type="entry name" value="NAD_malic_enz"/>
    <property type="match status" value="1"/>
</dbReference>
<dbReference type="InterPro" id="IPR046346">
    <property type="entry name" value="Aminoacid_DH-like_N_sf"/>
</dbReference>
<dbReference type="InterPro" id="IPR015884">
    <property type="entry name" value="Malic_enzyme_CS"/>
</dbReference>
<dbReference type="InterPro" id="IPR012301">
    <property type="entry name" value="Malic_N_dom"/>
</dbReference>
<dbReference type="InterPro" id="IPR037062">
    <property type="entry name" value="Malic_N_dom_sf"/>
</dbReference>
<dbReference type="InterPro" id="IPR012302">
    <property type="entry name" value="Malic_NAD-bd"/>
</dbReference>
<dbReference type="InterPro" id="IPR001891">
    <property type="entry name" value="Malic_OxRdtase"/>
</dbReference>
<dbReference type="InterPro" id="IPR036291">
    <property type="entry name" value="NAD(P)-bd_dom_sf"/>
</dbReference>
<dbReference type="InterPro" id="IPR023667">
    <property type="entry name" value="NAD_malic_enz_proteobac"/>
</dbReference>
<dbReference type="NCBIfam" id="NF010052">
    <property type="entry name" value="PRK13529.1"/>
    <property type="match status" value="1"/>
</dbReference>
<dbReference type="PANTHER" id="PTHR23406">
    <property type="entry name" value="MALIC ENZYME-RELATED"/>
    <property type="match status" value="1"/>
</dbReference>
<dbReference type="PANTHER" id="PTHR23406:SF34">
    <property type="entry name" value="NAD-DEPENDENT MALIC ENZYME, MITOCHONDRIAL"/>
    <property type="match status" value="1"/>
</dbReference>
<dbReference type="Pfam" id="PF00390">
    <property type="entry name" value="malic"/>
    <property type="match status" value="1"/>
</dbReference>
<dbReference type="Pfam" id="PF03949">
    <property type="entry name" value="Malic_M"/>
    <property type="match status" value="1"/>
</dbReference>
<dbReference type="PIRSF" id="PIRSF000106">
    <property type="entry name" value="ME"/>
    <property type="match status" value="1"/>
</dbReference>
<dbReference type="PRINTS" id="PR00072">
    <property type="entry name" value="MALOXRDTASE"/>
</dbReference>
<dbReference type="SMART" id="SM01274">
    <property type="entry name" value="malic"/>
    <property type="match status" value="1"/>
</dbReference>
<dbReference type="SMART" id="SM00919">
    <property type="entry name" value="Malic_M"/>
    <property type="match status" value="1"/>
</dbReference>
<dbReference type="SUPFAM" id="SSF53223">
    <property type="entry name" value="Aminoacid dehydrogenase-like, N-terminal domain"/>
    <property type="match status" value="1"/>
</dbReference>
<dbReference type="SUPFAM" id="SSF51735">
    <property type="entry name" value="NAD(P)-binding Rossmann-fold domains"/>
    <property type="match status" value="1"/>
</dbReference>
<dbReference type="PROSITE" id="PS00331">
    <property type="entry name" value="MALIC_ENZYMES"/>
    <property type="match status" value="1"/>
</dbReference>
<accession>Q7MJC0</accession>
<feature type="chain" id="PRO_0000160239" description="NAD-dependent malic enzyme 2">
    <location>
        <begin position="1"/>
        <end position="559"/>
    </location>
</feature>
<feature type="active site" description="Proton donor" evidence="1">
    <location>
        <position position="98"/>
    </location>
</feature>
<feature type="active site" description="Proton acceptor" evidence="1">
    <location>
        <position position="169"/>
    </location>
</feature>
<feature type="binding site" evidence="1">
    <location>
        <position position="151"/>
    </location>
    <ligand>
        <name>NAD(+)</name>
        <dbReference type="ChEBI" id="CHEBI:57540"/>
    </ligand>
</feature>
<feature type="binding site" evidence="1">
    <location>
        <position position="240"/>
    </location>
    <ligand>
        <name>a divalent metal cation</name>
        <dbReference type="ChEBI" id="CHEBI:60240"/>
    </ligand>
</feature>
<feature type="binding site" evidence="1">
    <location>
        <position position="241"/>
    </location>
    <ligand>
        <name>a divalent metal cation</name>
        <dbReference type="ChEBI" id="CHEBI:60240"/>
    </ligand>
</feature>
<feature type="binding site" evidence="1">
    <location>
        <position position="264"/>
    </location>
    <ligand>
        <name>a divalent metal cation</name>
        <dbReference type="ChEBI" id="CHEBI:60240"/>
    </ligand>
</feature>
<feature type="binding site" evidence="1">
    <location>
        <position position="264"/>
    </location>
    <ligand>
        <name>NAD(+)</name>
        <dbReference type="ChEBI" id="CHEBI:57540"/>
    </ligand>
</feature>
<feature type="binding site" evidence="1">
    <location>
        <position position="413"/>
    </location>
    <ligand>
        <name>NAD(+)</name>
        <dbReference type="ChEBI" id="CHEBI:57540"/>
    </ligand>
</feature>
<feature type="site" description="Important for activity" evidence="1">
    <location>
        <position position="264"/>
    </location>
</feature>
<name>MAO12_VIBVY</name>
<proteinExistence type="inferred from homology"/>
<protein>
    <recommendedName>
        <fullName evidence="1">NAD-dependent malic enzyme 2</fullName>
        <shortName evidence="1">NAD-ME 2</shortName>
        <ecNumber evidence="1">1.1.1.38</ecNumber>
    </recommendedName>
</protein>
<sequence length="559" mass="62073">MSKKMFIRQAGNTLLNTPLLNKGSAFTLEERKNFNLIGLLPANIETIDEQVSRAYEQFSLFNSAMEKHIYLRNIQDTNETLYFRLINQHIEEMMPIIYTPTVGEACQKFSQIYRRNRGLFLSFEDQDELEAILNNAPNTHVKVIVITDGERILGLGDQGIGGMGIPIGKLALYTACGGISPEHTLPIVLDVGTNNSALLSDPMYMGWRHPRITGDQYDDFVDDCLKAIRRRWPNALIQFEDFAQANAMPLLMRYQNQFCCFNDDIQGTASVTVGTLLAAAHATGKKLSAQKVLFAGAGSAGCGIAEAIVAQMVSEGISVQQARSQVFMVDRWGMLEQEMPNLLPFQKPLAQPASLRTEWQIEANREISLLDVIQHAHPDVLIGVTGVPGLFNQEIIEAMAEDCERPVVMPLSNPTSRVEAKPEDILMWTQGQAIVATGSPFPDVVLAGKRYPIAQCNNSYIFPGVGLGVISANAHRVTNEMLQQASITLASLSPMLNGGNMLLPPLSEIQNVSRKIALEVAKKAVEQGKASHRTEERLLERIDEEFWYAQYCEYRRIAS</sequence>
<keyword id="KW-0479">Metal-binding</keyword>
<keyword id="KW-0520">NAD</keyword>
<keyword id="KW-0560">Oxidoreductase</keyword>
<comment type="catalytic activity">
    <reaction evidence="1">
        <text>(S)-malate + NAD(+) = pyruvate + CO2 + NADH</text>
        <dbReference type="Rhea" id="RHEA:12653"/>
        <dbReference type="ChEBI" id="CHEBI:15361"/>
        <dbReference type="ChEBI" id="CHEBI:15589"/>
        <dbReference type="ChEBI" id="CHEBI:16526"/>
        <dbReference type="ChEBI" id="CHEBI:57540"/>
        <dbReference type="ChEBI" id="CHEBI:57945"/>
        <dbReference type="EC" id="1.1.1.38"/>
    </reaction>
</comment>
<comment type="catalytic activity">
    <reaction evidence="1">
        <text>oxaloacetate + H(+) = pyruvate + CO2</text>
        <dbReference type="Rhea" id="RHEA:15641"/>
        <dbReference type="ChEBI" id="CHEBI:15361"/>
        <dbReference type="ChEBI" id="CHEBI:15378"/>
        <dbReference type="ChEBI" id="CHEBI:16452"/>
        <dbReference type="ChEBI" id="CHEBI:16526"/>
        <dbReference type="EC" id="1.1.1.38"/>
    </reaction>
</comment>
<comment type="cofactor">
    <cofactor evidence="1">
        <name>Mg(2+)</name>
        <dbReference type="ChEBI" id="CHEBI:18420"/>
    </cofactor>
    <cofactor evidence="1">
        <name>Mn(2+)</name>
        <dbReference type="ChEBI" id="CHEBI:29035"/>
    </cofactor>
    <text evidence="1">Divalent metal cations. Prefers magnesium or manganese.</text>
</comment>
<comment type="subunit">
    <text evidence="1">Homotetramer.</text>
</comment>
<comment type="similarity">
    <text evidence="1">Belongs to the malic enzymes family.</text>
</comment>